<protein>
    <recommendedName>
        <fullName evidence="1">Phosphatidylglycerol--prolipoprotein diacylglyceryl transferase</fullName>
        <ecNumber evidence="1">2.5.1.145</ecNumber>
    </recommendedName>
</protein>
<accession>Q83HQ2</accession>
<organism>
    <name type="scientific">Tropheryma whipplei (strain TW08/27)</name>
    <name type="common">Whipple's bacillus</name>
    <dbReference type="NCBI Taxonomy" id="218496"/>
    <lineage>
        <taxon>Bacteria</taxon>
        <taxon>Bacillati</taxon>
        <taxon>Actinomycetota</taxon>
        <taxon>Actinomycetes</taxon>
        <taxon>Micrococcales</taxon>
        <taxon>Tropherymataceae</taxon>
        <taxon>Tropheryma</taxon>
    </lineage>
</organism>
<reference key="1">
    <citation type="journal article" date="2003" name="Lancet">
        <title>Sequencing and analysis of the genome of the Whipple's disease bacterium Tropheryma whipplei.</title>
        <authorList>
            <person name="Bentley S.D."/>
            <person name="Maiwald M."/>
            <person name="Murphy L.D."/>
            <person name="Pallen M.J."/>
            <person name="Yeats C.A."/>
            <person name="Dover L.G."/>
            <person name="Norbertczak H.T."/>
            <person name="Besra G.S."/>
            <person name="Quail M.A."/>
            <person name="Harris D.E."/>
            <person name="von Herbay A."/>
            <person name="Goble A."/>
            <person name="Rutter S."/>
            <person name="Squares R."/>
            <person name="Squares S."/>
            <person name="Barrell B.G."/>
            <person name="Parkhill J."/>
            <person name="Relman D.A."/>
        </authorList>
    </citation>
    <scope>NUCLEOTIDE SEQUENCE [LARGE SCALE GENOMIC DNA]</scope>
    <source>
        <strain>TW08/27</strain>
    </source>
</reference>
<comment type="function">
    <text evidence="1">Catalyzes the transfer of the diacylglyceryl group from phosphatidylglycerol to the sulfhydryl group of the N-terminal cysteine of a prolipoprotein, the first step in the formation of mature lipoproteins.</text>
</comment>
<comment type="catalytic activity">
    <reaction evidence="1">
        <text>L-cysteinyl-[prolipoprotein] + a 1,2-diacyl-sn-glycero-3-phospho-(1'-sn-glycerol) = an S-1,2-diacyl-sn-glyceryl-L-cysteinyl-[prolipoprotein] + sn-glycerol 1-phosphate + H(+)</text>
        <dbReference type="Rhea" id="RHEA:56712"/>
        <dbReference type="Rhea" id="RHEA-COMP:14679"/>
        <dbReference type="Rhea" id="RHEA-COMP:14680"/>
        <dbReference type="ChEBI" id="CHEBI:15378"/>
        <dbReference type="ChEBI" id="CHEBI:29950"/>
        <dbReference type="ChEBI" id="CHEBI:57685"/>
        <dbReference type="ChEBI" id="CHEBI:64716"/>
        <dbReference type="ChEBI" id="CHEBI:140658"/>
        <dbReference type="EC" id="2.5.1.145"/>
    </reaction>
</comment>
<comment type="pathway">
    <text evidence="1">Protein modification; lipoprotein biosynthesis (diacylglyceryl transfer).</text>
</comment>
<comment type="subcellular location">
    <subcellularLocation>
        <location evidence="1">Cell membrane</location>
        <topology evidence="1">Multi-pass membrane protein</topology>
    </subcellularLocation>
</comment>
<comment type="similarity">
    <text evidence="1">Belongs to the Lgt family.</text>
</comment>
<evidence type="ECO:0000255" key="1">
    <source>
        <dbReference type="HAMAP-Rule" id="MF_01147"/>
    </source>
</evidence>
<gene>
    <name evidence="1" type="primary">lgt</name>
    <name type="ordered locus">TW463</name>
</gene>
<proteinExistence type="inferred from homology"/>
<dbReference type="EC" id="2.5.1.145" evidence="1"/>
<dbReference type="EMBL" id="BX251411">
    <property type="protein sequence ID" value="CAD67131.1"/>
    <property type="molecule type" value="Genomic_DNA"/>
</dbReference>
<dbReference type="RefSeq" id="WP_011096411.1">
    <property type="nucleotide sequence ID" value="NC_004551.1"/>
</dbReference>
<dbReference type="SMR" id="Q83HQ2"/>
<dbReference type="GeneID" id="67388240"/>
<dbReference type="KEGG" id="tws:TW463"/>
<dbReference type="HOGENOM" id="CLU_013386_1_0_11"/>
<dbReference type="UniPathway" id="UPA00664"/>
<dbReference type="GO" id="GO:0005886">
    <property type="term" value="C:plasma membrane"/>
    <property type="evidence" value="ECO:0007669"/>
    <property type="project" value="UniProtKB-SubCell"/>
</dbReference>
<dbReference type="GO" id="GO:0008961">
    <property type="term" value="F:phosphatidylglycerol-prolipoprotein diacylglyceryl transferase activity"/>
    <property type="evidence" value="ECO:0007669"/>
    <property type="project" value="UniProtKB-UniRule"/>
</dbReference>
<dbReference type="GO" id="GO:0042158">
    <property type="term" value="P:lipoprotein biosynthetic process"/>
    <property type="evidence" value="ECO:0007669"/>
    <property type="project" value="UniProtKB-UniRule"/>
</dbReference>
<dbReference type="HAMAP" id="MF_01147">
    <property type="entry name" value="Lgt"/>
    <property type="match status" value="1"/>
</dbReference>
<dbReference type="InterPro" id="IPR001640">
    <property type="entry name" value="Lgt"/>
</dbReference>
<dbReference type="NCBIfam" id="TIGR00544">
    <property type="entry name" value="lgt"/>
    <property type="match status" value="1"/>
</dbReference>
<dbReference type="PANTHER" id="PTHR30589:SF0">
    <property type="entry name" value="PHOSPHATIDYLGLYCEROL--PROLIPOPROTEIN DIACYLGLYCERYL TRANSFERASE"/>
    <property type="match status" value="1"/>
</dbReference>
<dbReference type="PANTHER" id="PTHR30589">
    <property type="entry name" value="PROLIPOPROTEIN DIACYLGLYCERYL TRANSFERASE"/>
    <property type="match status" value="1"/>
</dbReference>
<dbReference type="Pfam" id="PF01790">
    <property type="entry name" value="LGT"/>
    <property type="match status" value="1"/>
</dbReference>
<keyword id="KW-1003">Cell membrane</keyword>
<keyword id="KW-0472">Membrane</keyword>
<keyword id="KW-0808">Transferase</keyword>
<keyword id="KW-0812">Transmembrane</keyword>
<keyword id="KW-1133">Transmembrane helix</keyword>
<sequence>MHFYIPPPPISGFWLGPLYVHMYSVFMLAGALVLFELTNRRFIVLTGNREFTAFAVTSLLIPVILGARLWHVVSHTQMYEHQPFYKVFAIWQGGLGFIGGVFSGLICFFVIAKIKKVPPFTFLDALAPGILVALCFARLGNYFNGEVFGTETTLPWGLKLSHEGFKDLNVEKYFHPIFLYEIILNVFIIVILLVLEKRVFVKTVFPKGSVFAAFLVLYGLGRFALEPMRYNLQQNSFGLDLNYVGAAAMIIVGVLIACRHTIASGKLRNSGD</sequence>
<name>LGT_TROW8</name>
<feature type="chain" id="PRO_0000172707" description="Phosphatidylglycerol--prolipoprotein diacylglyceryl transferase">
    <location>
        <begin position="1"/>
        <end position="272"/>
    </location>
</feature>
<feature type="transmembrane region" description="Helical" evidence="1">
    <location>
        <begin position="15"/>
        <end position="35"/>
    </location>
</feature>
<feature type="transmembrane region" description="Helical" evidence="1">
    <location>
        <begin position="53"/>
        <end position="73"/>
    </location>
</feature>
<feature type="transmembrane region" description="Helical" evidence="1">
    <location>
        <begin position="94"/>
        <end position="114"/>
    </location>
</feature>
<feature type="transmembrane region" description="Helical" evidence="1">
    <location>
        <begin position="117"/>
        <end position="137"/>
    </location>
</feature>
<feature type="transmembrane region" description="Helical" evidence="1">
    <location>
        <begin position="174"/>
        <end position="194"/>
    </location>
</feature>
<feature type="transmembrane region" description="Helical" evidence="1">
    <location>
        <begin position="199"/>
        <end position="219"/>
    </location>
</feature>
<feature type="transmembrane region" description="Helical" evidence="1">
    <location>
        <begin position="237"/>
        <end position="257"/>
    </location>
</feature>
<feature type="binding site" evidence="1">
    <location>
        <position position="138"/>
    </location>
    <ligand>
        <name>a 1,2-diacyl-sn-glycero-3-phospho-(1'-sn-glycerol)</name>
        <dbReference type="ChEBI" id="CHEBI:64716"/>
    </ligand>
</feature>